<name>RL32_LACDB</name>
<dbReference type="EMBL" id="CP000412">
    <property type="protein sequence ID" value="ABJ58365.1"/>
    <property type="molecule type" value="Genomic_DNA"/>
</dbReference>
<dbReference type="RefSeq" id="WP_003614010.1">
    <property type="nucleotide sequence ID" value="NC_008529.1"/>
</dbReference>
<dbReference type="SMR" id="Q04B07"/>
<dbReference type="KEGG" id="lbu:LBUL_0751"/>
<dbReference type="HOGENOM" id="CLU_129084_2_1_9"/>
<dbReference type="BioCyc" id="LDEL321956:LBUL_RS09930-MONOMER"/>
<dbReference type="GO" id="GO:0015934">
    <property type="term" value="C:large ribosomal subunit"/>
    <property type="evidence" value="ECO:0007669"/>
    <property type="project" value="InterPro"/>
</dbReference>
<dbReference type="GO" id="GO:0003735">
    <property type="term" value="F:structural constituent of ribosome"/>
    <property type="evidence" value="ECO:0007669"/>
    <property type="project" value="InterPro"/>
</dbReference>
<dbReference type="GO" id="GO:0006412">
    <property type="term" value="P:translation"/>
    <property type="evidence" value="ECO:0007669"/>
    <property type="project" value="UniProtKB-UniRule"/>
</dbReference>
<dbReference type="HAMAP" id="MF_00340">
    <property type="entry name" value="Ribosomal_bL32"/>
    <property type="match status" value="1"/>
</dbReference>
<dbReference type="InterPro" id="IPR002677">
    <property type="entry name" value="Ribosomal_bL32"/>
</dbReference>
<dbReference type="InterPro" id="IPR044957">
    <property type="entry name" value="Ribosomal_bL32_bact"/>
</dbReference>
<dbReference type="InterPro" id="IPR011332">
    <property type="entry name" value="Ribosomal_zn-bd"/>
</dbReference>
<dbReference type="NCBIfam" id="TIGR01031">
    <property type="entry name" value="rpmF_bact"/>
    <property type="match status" value="1"/>
</dbReference>
<dbReference type="PANTHER" id="PTHR35534">
    <property type="entry name" value="50S RIBOSOMAL PROTEIN L32"/>
    <property type="match status" value="1"/>
</dbReference>
<dbReference type="PANTHER" id="PTHR35534:SF1">
    <property type="entry name" value="LARGE RIBOSOMAL SUBUNIT PROTEIN BL32"/>
    <property type="match status" value="1"/>
</dbReference>
<dbReference type="Pfam" id="PF01783">
    <property type="entry name" value="Ribosomal_L32p"/>
    <property type="match status" value="1"/>
</dbReference>
<dbReference type="SUPFAM" id="SSF57829">
    <property type="entry name" value="Zn-binding ribosomal proteins"/>
    <property type="match status" value="1"/>
</dbReference>
<feature type="chain" id="PRO_0000296485" description="Large ribosomal subunit protein bL32">
    <location>
        <begin position="1"/>
        <end position="63"/>
    </location>
</feature>
<accession>Q04B07</accession>
<comment type="similarity">
    <text evidence="1">Belongs to the bacterial ribosomal protein bL32 family.</text>
</comment>
<gene>
    <name evidence="1" type="primary">rpmF</name>
    <name type="ordered locus">LBUL_0751</name>
</gene>
<organism>
    <name type="scientific">Lactobacillus delbrueckii subsp. bulgaricus (strain ATCC BAA-365 / Lb-18)</name>
    <dbReference type="NCBI Taxonomy" id="321956"/>
    <lineage>
        <taxon>Bacteria</taxon>
        <taxon>Bacillati</taxon>
        <taxon>Bacillota</taxon>
        <taxon>Bacilli</taxon>
        <taxon>Lactobacillales</taxon>
        <taxon>Lactobacillaceae</taxon>
        <taxon>Lactobacillus</taxon>
    </lineage>
</organism>
<evidence type="ECO:0000255" key="1">
    <source>
        <dbReference type="HAMAP-Rule" id="MF_00340"/>
    </source>
</evidence>
<evidence type="ECO:0000305" key="2"/>
<sequence length="63" mass="7156">MAVPARHTSKQKKRSRRAHLKLSVPAMHYDATTGEYRLSHRVSPKGYYKGRQVVSENSASDND</sequence>
<proteinExistence type="inferred from homology"/>
<reference key="1">
    <citation type="journal article" date="2006" name="Proc. Natl. Acad. Sci. U.S.A.">
        <title>Comparative genomics of the lactic acid bacteria.</title>
        <authorList>
            <person name="Makarova K.S."/>
            <person name="Slesarev A."/>
            <person name="Wolf Y.I."/>
            <person name="Sorokin A."/>
            <person name="Mirkin B."/>
            <person name="Koonin E.V."/>
            <person name="Pavlov A."/>
            <person name="Pavlova N."/>
            <person name="Karamychev V."/>
            <person name="Polouchine N."/>
            <person name="Shakhova V."/>
            <person name="Grigoriev I."/>
            <person name="Lou Y."/>
            <person name="Rohksar D."/>
            <person name="Lucas S."/>
            <person name="Huang K."/>
            <person name="Goodstein D.M."/>
            <person name="Hawkins T."/>
            <person name="Plengvidhya V."/>
            <person name="Welker D."/>
            <person name="Hughes J."/>
            <person name="Goh Y."/>
            <person name="Benson A."/>
            <person name="Baldwin K."/>
            <person name="Lee J.-H."/>
            <person name="Diaz-Muniz I."/>
            <person name="Dosti B."/>
            <person name="Smeianov V."/>
            <person name="Wechter W."/>
            <person name="Barabote R."/>
            <person name="Lorca G."/>
            <person name="Altermann E."/>
            <person name="Barrangou R."/>
            <person name="Ganesan B."/>
            <person name="Xie Y."/>
            <person name="Rawsthorne H."/>
            <person name="Tamir D."/>
            <person name="Parker C."/>
            <person name="Breidt F."/>
            <person name="Broadbent J.R."/>
            <person name="Hutkins R."/>
            <person name="O'Sullivan D."/>
            <person name="Steele J."/>
            <person name="Unlu G."/>
            <person name="Saier M.H. Jr."/>
            <person name="Klaenhammer T."/>
            <person name="Richardson P."/>
            <person name="Kozyavkin S."/>
            <person name="Weimer B.C."/>
            <person name="Mills D.A."/>
        </authorList>
    </citation>
    <scope>NUCLEOTIDE SEQUENCE [LARGE SCALE GENOMIC DNA]</scope>
    <source>
        <strain>ATCC BAA-365 / Lb-18</strain>
    </source>
</reference>
<keyword id="KW-0687">Ribonucleoprotein</keyword>
<keyword id="KW-0689">Ribosomal protein</keyword>
<protein>
    <recommendedName>
        <fullName evidence="1">Large ribosomal subunit protein bL32</fullName>
    </recommendedName>
    <alternativeName>
        <fullName evidence="2">50S ribosomal protein L32</fullName>
    </alternativeName>
</protein>